<feature type="chain" id="PRO_0000256202" description="Histone transcription regulator 3 homolog">
    <location>
        <begin position="1"/>
        <end position="1651"/>
    </location>
</feature>
<feature type="repeat" description="TPR">
    <location>
        <begin position="30"/>
        <end position="63"/>
    </location>
</feature>
<feature type="region of interest" description="Disordered" evidence="2">
    <location>
        <begin position="1"/>
        <end position="22"/>
    </location>
</feature>
<feature type="region of interest" description="Disordered" evidence="2">
    <location>
        <begin position="333"/>
        <end position="368"/>
    </location>
</feature>
<feature type="region of interest" description="Disordered" evidence="2">
    <location>
        <begin position="1575"/>
        <end position="1632"/>
    </location>
</feature>
<feature type="compositionally biased region" description="Polar residues" evidence="2">
    <location>
        <begin position="1"/>
        <end position="13"/>
    </location>
</feature>
<feature type="compositionally biased region" description="Basic and acidic residues" evidence="2">
    <location>
        <begin position="333"/>
        <end position="365"/>
    </location>
</feature>
<feature type="compositionally biased region" description="Low complexity" evidence="2">
    <location>
        <begin position="1589"/>
        <end position="1609"/>
    </location>
</feature>
<gene>
    <name type="primary">HIR3</name>
    <name type="ordered locus">KLLA0B03850g</name>
</gene>
<keyword id="KW-0159">Chromosome partition</keyword>
<keyword id="KW-0539">Nucleus</keyword>
<keyword id="KW-1185">Reference proteome</keyword>
<keyword id="KW-0677">Repeat</keyword>
<keyword id="KW-0802">TPR repeat</keyword>
<keyword id="KW-0804">Transcription</keyword>
<keyword id="KW-0805">Transcription regulation</keyword>
<reference key="1">
    <citation type="journal article" date="2004" name="Nature">
        <title>Genome evolution in yeasts.</title>
        <authorList>
            <person name="Dujon B."/>
            <person name="Sherman D."/>
            <person name="Fischer G."/>
            <person name="Durrens P."/>
            <person name="Casaregola S."/>
            <person name="Lafontaine I."/>
            <person name="de Montigny J."/>
            <person name="Marck C."/>
            <person name="Neuveglise C."/>
            <person name="Talla E."/>
            <person name="Goffard N."/>
            <person name="Frangeul L."/>
            <person name="Aigle M."/>
            <person name="Anthouard V."/>
            <person name="Babour A."/>
            <person name="Barbe V."/>
            <person name="Barnay S."/>
            <person name="Blanchin S."/>
            <person name="Beckerich J.-M."/>
            <person name="Beyne E."/>
            <person name="Bleykasten C."/>
            <person name="Boisrame A."/>
            <person name="Boyer J."/>
            <person name="Cattolico L."/>
            <person name="Confanioleri F."/>
            <person name="de Daruvar A."/>
            <person name="Despons L."/>
            <person name="Fabre E."/>
            <person name="Fairhead C."/>
            <person name="Ferry-Dumazet H."/>
            <person name="Groppi A."/>
            <person name="Hantraye F."/>
            <person name="Hennequin C."/>
            <person name="Jauniaux N."/>
            <person name="Joyet P."/>
            <person name="Kachouri R."/>
            <person name="Kerrest A."/>
            <person name="Koszul R."/>
            <person name="Lemaire M."/>
            <person name="Lesur I."/>
            <person name="Ma L."/>
            <person name="Muller H."/>
            <person name="Nicaud J.-M."/>
            <person name="Nikolski M."/>
            <person name="Oztas S."/>
            <person name="Ozier-Kalogeropoulos O."/>
            <person name="Pellenz S."/>
            <person name="Potier S."/>
            <person name="Richard G.-F."/>
            <person name="Straub M.-L."/>
            <person name="Suleau A."/>
            <person name="Swennen D."/>
            <person name="Tekaia F."/>
            <person name="Wesolowski-Louvel M."/>
            <person name="Westhof E."/>
            <person name="Wirth B."/>
            <person name="Zeniou-Meyer M."/>
            <person name="Zivanovic Y."/>
            <person name="Bolotin-Fukuhara M."/>
            <person name="Thierry A."/>
            <person name="Bouchier C."/>
            <person name="Caudron B."/>
            <person name="Scarpelli C."/>
            <person name="Gaillardin C."/>
            <person name="Weissenbach J."/>
            <person name="Wincker P."/>
            <person name="Souciet J.-L."/>
        </authorList>
    </citation>
    <scope>NUCLEOTIDE SEQUENCE [LARGE SCALE GENOMIC DNA]</scope>
    <source>
        <strain>ATCC 8585 / CBS 2359 / DSM 70799 / NBRC 1267 / NRRL Y-1140 / WM37</strain>
    </source>
</reference>
<comment type="function">
    <text evidence="1">Has a role in a nucleosome assembly pathway that is required for the integrity of heterochromatin and proper chromosome segregation.</text>
</comment>
<comment type="subcellular location">
    <subcellularLocation>
        <location evidence="1">Nucleus</location>
    </subcellularLocation>
</comment>
<comment type="similarity">
    <text evidence="3">Belongs to the HIR3 family.</text>
</comment>
<organism>
    <name type="scientific">Kluyveromyces lactis (strain ATCC 8585 / CBS 2359 / DSM 70799 / NBRC 1267 / NRRL Y-1140 / WM37)</name>
    <name type="common">Yeast</name>
    <name type="synonym">Candida sphaerica</name>
    <dbReference type="NCBI Taxonomy" id="284590"/>
    <lineage>
        <taxon>Eukaryota</taxon>
        <taxon>Fungi</taxon>
        <taxon>Dikarya</taxon>
        <taxon>Ascomycota</taxon>
        <taxon>Saccharomycotina</taxon>
        <taxon>Saccharomycetes</taxon>
        <taxon>Saccharomycetales</taxon>
        <taxon>Saccharomycetaceae</taxon>
        <taxon>Kluyveromyces</taxon>
    </lineage>
</organism>
<evidence type="ECO:0000250" key="1"/>
<evidence type="ECO:0000256" key="2">
    <source>
        <dbReference type="SAM" id="MobiDB-lite"/>
    </source>
</evidence>
<evidence type="ECO:0000305" key="3"/>
<accession>Q6CWI4</accession>
<protein>
    <recommendedName>
        <fullName>Histone transcription regulator 3 homolog</fullName>
    </recommendedName>
</protein>
<name>HIR3_KLULA</name>
<proteinExistence type="inferred from homology"/>
<dbReference type="EMBL" id="CR382122">
    <property type="protein sequence ID" value="CAH02098.1"/>
    <property type="molecule type" value="Genomic_DNA"/>
</dbReference>
<dbReference type="RefSeq" id="XP_451705.1">
    <property type="nucleotide sequence ID" value="XM_451705.1"/>
</dbReference>
<dbReference type="SMR" id="Q6CWI4"/>
<dbReference type="FunCoup" id="Q6CWI4">
    <property type="interactions" value="179"/>
</dbReference>
<dbReference type="STRING" id="284590.Q6CWI4"/>
<dbReference type="PaxDb" id="284590-Q6CWI4"/>
<dbReference type="KEGG" id="kla:KLLA0_B03850g"/>
<dbReference type="eggNOG" id="ENOG502QQX4">
    <property type="taxonomic scope" value="Eukaryota"/>
</dbReference>
<dbReference type="HOGENOM" id="CLU_001316_0_0_1"/>
<dbReference type="InParanoid" id="Q6CWI4"/>
<dbReference type="OMA" id="WETWYRL"/>
<dbReference type="Proteomes" id="UP000000598">
    <property type="component" value="Chromosome B"/>
</dbReference>
<dbReference type="GO" id="GO:0000417">
    <property type="term" value="C:HIR complex"/>
    <property type="evidence" value="ECO:0007669"/>
    <property type="project" value="TreeGrafter"/>
</dbReference>
<dbReference type="GO" id="GO:0005634">
    <property type="term" value="C:nucleus"/>
    <property type="evidence" value="ECO:0007669"/>
    <property type="project" value="UniProtKB-SubCell"/>
</dbReference>
<dbReference type="GO" id="GO:0031491">
    <property type="term" value="F:nucleosome binding"/>
    <property type="evidence" value="ECO:0007669"/>
    <property type="project" value="TreeGrafter"/>
</dbReference>
<dbReference type="GO" id="GO:0006325">
    <property type="term" value="P:chromatin organization"/>
    <property type="evidence" value="ECO:0007669"/>
    <property type="project" value="InterPro"/>
</dbReference>
<dbReference type="GO" id="GO:0007059">
    <property type="term" value="P:chromosome segregation"/>
    <property type="evidence" value="ECO:0007669"/>
    <property type="project" value="UniProtKB-KW"/>
</dbReference>
<dbReference type="InterPro" id="IPR033053">
    <property type="entry name" value="Hir3/CABIN1"/>
</dbReference>
<dbReference type="PANTHER" id="PTHR15502">
    <property type="entry name" value="CALCINEURIN-BINDING PROTEIN CABIN 1-RELATED"/>
    <property type="match status" value="1"/>
</dbReference>
<dbReference type="PANTHER" id="PTHR15502:SF7">
    <property type="entry name" value="CALCINEURIN-BINDING PROTEIN CABIN-1"/>
    <property type="match status" value="1"/>
</dbReference>
<sequence length="1651" mass="191460">MSSFAALNLSTNENADESKDHSRELQVEESSKIFQLALIQLKAKRFDDAKETFDRLFEIDVIKPNKWGLYEYSSPTLDSLRYLAYRNRGILHYQYAKENFKQMESDDVVEHILKTLECLLESLQHGEADNTVTHLLLKIFWSFNSTKLSRTILEYELTRSPEEIRLLSSLSAMFKDQKRVFKQYSQLLKKLHVTSLPQNIPTAVEAVLNCIETCDVEEGQIEPLLKDIKAMKTEDDEILKELDGSNLNLNELSWEELGVSLRSLVPKTKVVNILGRKSDTYSDLEAPIEYVSFTTDEFMEKLSDSSNESPGHSPEHFEDAVSVMPETNNIEVSVEREPSAKRQDSTDRPAQRSSKRFKEREKVQEPDVEQQVEFHTYIINEINQSLHVSGIEKDISIEELDPNNVAKRQELCMSDFYDCLTSWTNKHTEFLKQGQENFSVKGSTDDFTQLTMLLRSSMFSGDVEPTDSLSEIEAEDVRRFIRDVNDKKLHFHAVRFLFIKELLKLREDGTCLVTDYFWSPALYEVVEFFSMAIEVNLYQMIEPSTDESTVSIAVSIFEIMTNMMGNICNDLANKKAQGQKYNELESQRNKLQRKIVRWYEMLLSKPLSTKLKFRFQWSHFSCLQCTTDVTNSTLITTIEDIENSLKEFPDFGTVAYSNYNNISSLSLKTVQSQFSKIKMLRRFTIVDIENEDEDNTHKDYIEHLYCILNQIPCEGTDFQSLLSFVNTSPFLMKLKLWKLLLNYFASRKDQLRFQNCFFSSIKFLLARLSSEEYQIQSQLQRQQTLLSTLTHIGEFSKRFFQVLCDNWDMSLKNPSRDQLQVLVSIFRLLYPLVFYETLTEKNASLKSFFKKAVKSSITIQDIFLTVASLMILCHKFITLEKENAKEEFTGSIIDLISALHMLAGKFEFCDRFDGNFLKVQEKLLCEFSNDSAFTHLKRELWCRYHISIGLDNPEDQHQTHAQPMVKANAIMLSNYFIKFQYQDRNILVLSNNRSNFKQFFETVMELIGDIDYEANHVLSRNEYFFNQYFTAPITLKTIRDAYAGEFEIEFTSPNDDLQSGVDGGLFYVSAVHALNQYKARKKSMQARPSELDAIISTLTTDILYNTKRFESWYLLGKCYSFVVEDDLTWTSDKLASRDKKQATAFAEKKAILCYLMALSLYLSTFKETTSEQMKNDNKIVFRNLLESLGKEMLQAYVKPMSSMSYTWKLKPVLVLKADGSLENLPISYKPSISETNILRCILMILAKADTLYNKDEERNWMNPFYISKVHFKTDRKLFKESGICLLQDSCRLALLQSSVSGSDNILEAHYALVSYCYKCFKDRTFSLAEAISHLREDNGFFGLPEEEWQVEDDKSFFNLIIRLLKYILSKDKQKWQHRPIYRIAQIKYTEFEDTDGAMKEMNKLLALKSVNKNVVNIWKPENELPGKHFVYAYQYVLFYMDLLNEKHDFMAIGGMVKKLRRFGSGMINSQDAINKAVELFVNGAKVKLSLNEKEHGELLMQRIPFPEFVELSEELFNAFKKGDYQSDVLDVFLLAYNLKKGTNSIQFDGVCITIYFKYFYCPFVENKKQSTPYPAPIIEGISGPQPENSPSQQLPQSQSQPQLPRSPSPNTANNKEKTAKTPVKNPTSIRKRVSKRDVFDRVVKLIEKRLS</sequence>